<name>KATG_CHRSD</name>
<feature type="chain" id="PRO_0000354761" description="Catalase-peroxidase">
    <location>
        <begin position="1"/>
        <end position="717"/>
    </location>
</feature>
<feature type="region of interest" description="Disordered" evidence="2">
    <location>
        <begin position="1"/>
        <end position="20"/>
    </location>
</feature>
<feature type="compositionally biased region" description="Polar residues" evidence="2">
    <location>
        <begin position="11"/>
        <end position="20"/>
    </location>
</feature>
<feature type="active site" description="Proton acceptor" evidence="1">
    <location>
        <position position="92"/>
    </location>
</feature>
<feature type="binding site" description="axial binding residue" evidence="1">
    <location>
        <position position="260"/>
    </location>
    <ligand>
        <name>heme b</name>
        <dbReference type="ChEBI" id="CHEBI:60344"/>
    </ligand>
    <ligandPart>
        <name>Fe</name>
        <dbReference type="ChEBI" id="CHEBI:18248"/>
    </ligandPart>
</feature>
<feature type="site" description="Transition state stabilizer" evidence="1">
    <location>
        <position position="88"/>
    </location>
</feature>
<feature type="cross-link" description="Tryptophyl-tyrosyl-methioninium (Trp-Tyr) (with M-245)" evidence="1">
    <location>
        <begin position="91"/>
        <end position="219"/>
    </location>
</feature>
<feature type="cross-link" description="Tryptophyl-tyrosyl-methioninium (Tyr-Met) (with W-91)" evidence="1">
    <location>
        <begin position="219"/>
        <end position="245"/>
    </location>
</feature>
<accession>Q1R185</accession>
<organism>
    <name type="scientific">Chromohalobacter salexigens (strain ATCC BAA-138 / DSM 3043 / CIP 106854 / NCIMB 13768 / 1H11)</name>
    <dbReference type="NCBI Taxonomy" id="290398"/>
    <lineage>
        <taxon>Bacteria</taxon>
        <taxon>Pseudomonadati</taxon>
        <taxon>Pseudomonadota</taxon>
        <taxon>Gammaproteobacteria</taxon>
        <taxon>Oceanospirillales</taxon>
        <taxon>Halomonadaceae</taxon>
        <taxon>Chromohalobacter</taxon>
    </lineage>
</organism>
<proteinExistence type="inferred from homology"/>
<sequence length="717" mass="80005">MSGKCPVMHGGNTSTGTSNKDWWPEGINLDILHQHDRKTNPMDPDFNYREEVKKLDVQALKNDLRQLMVDSQAWWPADWGSYVGMFARVAWHSAGSYRLADGRGGGGTGNQRFAPLNSWPDNVNTDKGRRLLWPIKKKYGNKISWADLMVLSGTIAYEVAGLKTYGFAFGREDIWHPEKDIYWGDEKEWLAPSDERYADVEKPDTMENPLAAVQMGLIYVNPEGVNGQPDPQKTAEQVRETFARMAMNDEETAALTAGGHTIGKCHGNGEAENLSAEPEAADVEYQGIGWMNTKGRGIGRDTVVSGIEGAWTKNPTQWDMGWFDMLFNHEWELKKSPAGAWQWEPVDIAEEDMPVDVEDPSIRRMPIMTDADMAMKVDPVYNEICRKFMDDPEYFSETFAKAWFKLTHRDLGPKARYIGPDVPADDLIWQDPIPAGSIAYCEEVVKQKIAESGLSIGEMVSTAWDSARTYRGSDMRGGANGARIRLAPQKTWPGNEPERLAKVLDVYERISAETGASIADVIVLGGSVGIERAAKAAGHDVHVPFLKGRGDATDEMTDAASFAPLEPLADGFRNWQKQDYVVKPEEMLLDRAQLMGLTGPEMTVLIGGMRVLGTNHGGTRHGVFTDREGQLTNDFFVNLTDMGNTWKPAGNNVYEIRDRETDAVKWTASRVDLVFGSNSLLRSYAEVYAQDDNEEKFVNDFVAAWTKVMNADRFDVA</sequence>
<evidence type="ECO:0000255" key="1">
    <source>
        <dbReference type="HAMAP-Rule" id="MF_01961"/>
    </source>
</evidence>
<evidence type="ECO:0000256" key="2">
    <source>
        <dbReference type="SAM" id="MobiDB-lite"/>
    </source>
</evidence>
<gene>
    <name evidence="1" type="primary">katG</name>
    <name type="ordered locus">Csal_0159</name>
</gene>
<comment type="function">
    <text evidence="1">Bifunctional enzyme with both catalase and broad-spectrum peroxidase activity.</text>
</comment>
<comment type="catalytic activity">
    <reaction evidence="1">
        <text>H2O2 + AH2 = A + 2 H2O</text>
        <dbReference type="Rhea" id="RHEA:30275"/>
        <dbReference type="ChEBI" id="CHEBI:13193"/>
        <dbReference type="ChEBI" id="CHEBI:15377"/>
        <dbReference type="ChEBI" id="CHEBI:16240"/>
        <dbReference type="ChEBI" id="CHEBI:17499"/>
        <dbReference type="EC" id="1.11.1.21"/>
    </reaction>
</comment>
<comment type="catalytic activity">
    <reaction evidence="1">
        <text>2 H2O2 = O2 + 2 H2O</text>
        <dbReference type="Rhea" id="RHEA:20309"/>
        <dbReference type="ChEBI" id="CHEBI:15377"/>
        <dbReference type="ChEBI" id="CHEBI:15379"/>
        <dbReference type="ChEBI" id="CHEBI:16240"/>
        <dbReference type="EC" id="1.11.1.21"/>
    </reaction>
</comment>
<comment type="cofactor">
    <cofactor evidence="1">
        <name>heme b</name>
        <dbReference type="ChEBI" id="CHEBI:60344"/>
    </cofactor>
    <text evidence="1">Binds 1 heme b (iron(II)-protoporphyrin IX) group per dimer.</text>
</comment>
<comment type="subunit">
    <text evidence="1">Homodimer or homotetramer.</text>
</comment>
<comment type="PTM">
    <text evidence="1">Formation of the three residue Trp-Tyr-Met cross-link is important for the catalase, but not the peroxidase activity of the enzyme.</text>
</comment>
<comment type="similarity">
    <text evidence="1">Belongs to the peroxidase family. Peroxidase/catalase subfamily.</text>
</comment>
<protein>
    <recommendedName>
        <fullName evidence="1">Catalase-peroxidase</fullName>
        <shortName evidence="1">CP</shortName>
        <ecNumber evidence="1">1.11.1.21</ecNumber>
    </recommendedName>
    <alternativeName>
        <fullName evidence="1">Peroxidase/catalase</fullName>
    </alternativeName>
</protein>
<dbReference type="EC" id="1.11.1.21" evidence="1"/>
<dbReference type="EMBL" id="CP000285">
    <property type="protein sequence ID" value="ABE57523.1"/>
    <property type="molecule type" value="Genomic_DNA"/>
</dbReference>
<dbReference type="RefSeq" id="WP_011505469.1">
    <property type="nucleotide sequence ID" value="NC_007963.1"/>
</dbReference>
<dbReference type="SMR" id="Q1R185"/>
<dbReference type="STRING" id="290398.Csal_0159"/>
<dbReference type="PeroxiBase" id="2697">
    <property type="entry name" value="CsalCP01_DSM3043"/>
</dbReference>
<dbReference type="GeneID" id="95332909"/>
<dbReference type="KEGG" id="csa:Csal_0159"/>
<dbReference type="eggNOG" id="COG0376">
    <property type="taxonomic scope" value="Bacteria"/>
</dbReference>
<dbReference type="HOGENOM" id="CLU_025424_2_0_6"/>
<dbReference type="OrthoDB" id="9759743at2"/>
<dbReference type="Proteomes" id="UP000000239">
    <property type="component" value="Chromosome"/>
</dbReference>
<dbReference type="GO" id="GO:0005829">
    <property type="term" value="C:cytosol"/>
    <property type="evidence" value="ECO:0007669"/>
    <property type="project" value="TreeGrafter"/>
</dbReference>
<dbReference type="GO" id="GO:0004096">
    <property type="term" value="F:catalase activity"/>
    <property type="evidence" value="ECO:0007669"/>
    <property type="project" value="UniProtKB-UniRule"/>
</dbReference>
<dbReference type="GO" id="GO:0020037">
    <property type="term" value="F:heme binding"/>
    <property type="evidence" value="ECO:0007669"/>
    <property type="project" value="InterPro"/>
</dbReference>
<dbReference type="GO" id="GO:0046872">
    <property type="term" value="F:metal ion binding"/>
    <property type="evidence" value="ECO:0007669"/>
    <property type="project" value="UniProtKB-KW"/>
</dbReference>
<dbReference type="GO" id="GO:0070301">
    <property type="term" value="P:cellular response to hydrogen peroxide"/>
    <property type="evidence" value="ECO:0007669"/>
    <property type="project" value="TreeGrafter"/>
</dbReference>
<dbReference type="GO" id="GO:0042744">
    <property type="term" value="P:hydrogen peroxide catabolic process"/>
    <property type="evidence" value="ECO:0007669"/>
    <property type="project" value="UniProtKB-KW"/>
</dbReference>
<dbReference type="CDD" id="cd08200">
    <property type="entry name" value="catalase_peroxidase_2"/>
    <property type="match status" value="1"/>
</dbReference>
<dbReference type="FunFam" id="1.10.420.10:FF:000004">
    <property type="entry name" value="Catalase-peroxidase"/>
    <property type="match status" value="1"/>
</dbReference>
<dbReference type="FunFam" id="1.10.520.10:FF:000002">
    <property type="entry name" value="Catalase-peroxidase"/>
    <property type="match status" value="1"/>
</dbReference>
<dbReference type="Gene3D" id="1.10.520.10">
    <property type="match status" value="2"/>
</dbReference>
<dbReference type="Gene3D" id="1.10.420.10">
    <property type="entry name" value="Peroxidase, domain 2"/>
    <property type="match status" value="2"/>
</dbReference>
<dbReference type="HAMAP" id="MF_01961">
    <property type="entry name" value="Catal_peroxid"/>
    <property type="match status" value="1"/>
</dbReference>
<dbReference type="InterPro" id="IPR000763">
    <property type="entry name" value="Catalase_peroxidase"/>
</dbReference>
<dbReference type="InterPro" id="IPR002016">
    <property type="entry name" value="Haem_peroxidase"/>
</dbReference>
<dbReference type="InterPro" id="IPR010255">
    <property type="entry name" value="Haem_peroxidase_sf"/>
</dbReference>
<dbReference type="InterPro" id="IPR019794">
    <property type="entry name" value="Peroxidases_AS"/>
</dbReference>
<dbReference type="NCBIfam" id="TIGR00198">
    <property type="entry name" value="cat_per_HPI"/>
    <property type="match status" value="1"/>
</dbReference>
<dbReference type="NCBIfam" id="NF011635">
    <property type="entry name" value="PRK15061.1"/>
    <property type="match status" value="1"/>
</dbReference>
<dbReference type="PANTHER" id="PTHR30555:SF6">
    <property type="entry name" value="CATALASE-PEROXIDASE"/>
    <property type="match status" value="1"/>
</dbReference>
<dbReference type="PANTHER" id="PTHR30555">
    <property type="entry name" value="HYDROPEROXIDASE I, BIFUNCTIONAL CATALASE-PEROXIDASE"/>
    <property type="match status" value="1"/>
</dbReference>
<dbReference type="Pfam" id="PF00141">
    <property type="entry name" value="peroxidase"/>
    <property type="match status" value="2"/>
</dbReference>
<dbReference type="PRINTS" id="PR00460">
    <property type="entry name" value="BPEROXIDASE"/>
</dbReference>
<dbReference type="PRINTS" id="PR00458">
    <property type="entry name" value="PEROXIDASE"/>
</dbReference>
<dbReference type="SUPFAM" id="SSF48113">
    <property type="entry name" value="Heme-dependent peroxidases"/>
    <property type="match status" value="2"/>
</dbReference>
<dbReference type="PROSITE" id="PS00436">
    <property type="entry name" value="PEROXIDASE_2"/>
    <property type="match status" value="1"/>
</dbReference>
<dbReference type="PROSITE" id="PS50873">
    <property type="entry name" value="PEROXIDASE_4"/>
    <property type="match status" value="1"/>
</dbReference>
<reference key="1">
    <citation type="journal article" date="2011" name="Stand. Genomic Sci.">
        <title>Complete genome sequence of the halophilic and highly halotolerant Chromohalobacter salexigens type strain (1H11(T)).</title>
        <authorList>
            <person name="Copeland A."/>
            <person name="O'Connor K."/>
            <person name="Lucas S."/>
            <person name="Lapidus A."/>
            <person name="Berry K.W."/>
            <person name="Detter J.C."/>
            <person name="Del Rio T.G."/>
            <person name="Hammon N."/>
            <person name="Dalin E."/>
            <person name="Tice H."/>
            <person name="Pitluck S."/>
            <person name="Bruce D."/>
            <person name="Goodwin L."/>
            <person name="Han C."/>
            <person name="Tapia R."/>
            <person name="Saunders E."/>
            <person name="Schmutz J."/>
            <person name="Brettin T."/>
            <person name="Larimer F."/>
            <person name="Land M."/>
            <person name="Hauser L."/>
            <person name="Vargas C."/>
            <person name="Nieto J.J."/>
            <person name="Kyrpides N.C."/>
            <person name="Ivanova N."/>
            <person name="Goker M."/>
            <person name="Klenk H.P."/>
            <person name="Csonka L.N."/>
            <person name="Woyke T."/>
        </authorList>
    </citation>
    <scope>NUCLEOTIDE SEQUENCE [LARGE SCALE GENOMIC DNA]</scope>
    <source>
        <strain>ATCC BAA-138 / DSM 3043 / CIP 106854 / NCIMB 13768 / 1H11</strain>
    </source>
</reference>
<keyword id="KW-0349">Heme</keyword>
<keyword id="KW-0376">Hydrogen peroxide</keyword>
<keyword id="KW-0408">Iron</keyword>
<keyword id="KW-0479">Metal-binding</keyword>
<keyword id="KW-0560">Oxidoreductase</keyword>
<keyword id="KW-0575">Peroxidase</keyword>
<keyword id="KW-1185">Reference proteome</keyword>